<accession>B2FPX7</accession>
<comment type="function">
    <text evidence="1">Involved in DNA repair and RecF pathway recombination.</text>
</comment>
<comment type="similarity">
    <text evidence="1">Belongs to the RecO family.</text>
</comment>
<name>RECO_STRMK</name>
<evidence type="ECO:0000255" key="1">
    <source>
        <dbReference type="HAMAP-Rule" id="MF_00201"/>
    </source>
</evidence>
<sequence>MMIEDDTGFVLHARAYRETSLLVEVLSAQHGRVGLLARGVSTAKGQVLRAALQPLQWIRFSAQQRGELAQLRGAEALDAAPRLVGQAMLAGFYLSELTLRLAPRQDPLPELYLAYGEARARLAVGAGLAWTLRRFERELLTALGLGFELDSASDGQPIDPAARYELDPQEGAQRLLSERGGERRAAATGSALLALAADEEPAAADLASLRLPMRRVLAHHLGPRGLKSWEMLEQLAPRR</sequence>
<feature type="chain" id="PRO_1000099416" description="DNA repair protein RecO">
    <location>
        <begin position="1"/>
        <end position="239"/>
    </location>
</feature>
<organism>
    <name type="scientific">Stenotrophomonas maltophilia (strain K279a)</name>
    <dbReference type="NCBI Taxonomy" id="522373"/>
    <lineage>
        <taxon>Bacteria</taxon>
        <taxon>Pseudomonadati</taxon>
        <taxon>Pseudomonadota</taxon>
        <taxon>Gammaproteobacteria</taxon>
        <taxon>Lysobacterales</taxon>
        <taxon>Lysobacteraceae</taxon>
        <taxon>Stenotrophomonas</taxon>
        <taxon>Stenotrophomonas maltophilia group</taxon>
    </lineage>
</organism>
<proteinExistence type="inferred from homology"/>
<dbReference type="EMBL" id="AM743169">
    <property type="protein sequence ID" value="CAQ46968.1"/>
    <property type="molecule type" value="Genomic_DNA"/>
</dbReference>
<dbReference type="RefSeq" id="WP_005410598.1">
    <property type="nucleotide sequence ID" value="NC_010943.1"/>
</dbReference>
<dbReference type="SMR" id="B2FPX7"/>
<dbReference type="EnsemblBacteria" id="CAQ46968">
    <property type="protein sequence ID" value="CAQ46968"/>
    <property type="gene ID" value="Smlt3547"/>
</dbReference>
<dbReference type="KEGG" id="sml:Smlt3547"/>
<dbReference type="eggNOG" id="COG1381">
    <property type="taxonomic scope" value="Bacteria"/>
</dbReference>
<dbReference type="HOGENOM" id="CLU_066645_1_0_6"/>
<dbReference type="Proteomes" id="UP000008840">
    <property type="component" value="Chromosome"/>
</dbReference>
<dbReference type="GO" id="GO:0043590">
    <property type="term" value="C:bacterial nucleoid"/>
    <property type="evidence" value="ECO:0007669"/>
    <property type="project" value="TreeGrafter"/>
</dbReference>
<dbReference type="GO" id="GO:0006310">
    <property type="term" value="P:DNA recombination"/>
    <property type="evidence" value="ECO:0007669"/>
    <property type="project" value="UniProtKB-UniRule"/>
</dbReference>
<dbReference type="GO" id="GO:0006302">
    <property type="term" value="P:double-strand break repair"/>
    <property type="evidence" value="ECO:0007669"/>
    <property type="project" value="TreeGrafter"/>
</dbReference>
<dbReference type="Gene3D" id="2.40.50.140">
    <property type="entry name" value="Nucleic acid-binding proteins"/>
    <property type="match status" value="1"/>
</dbReference>
<dbReference type="Gene3D" id="1.20.1440.120">
    <property type="entry name" value="Recombination protein O, C-terminal domain"/>
    <property type="match status" value="1"/>
</dbReference>
<dbReference type="HAMAP" id="MF_00201">
    <property type="entry name" value="RecO"/>
    <property type="match status" value="1"/>
</dbReference>
<dbReference type="InterPro" id="IPR022572">
    <property type="entry name" value="DNA_rep/recomb_RecO_N"/>
</dbReference>
<dbReference type="InterPro" id="IPR012340">
    <property type="entry name" value="NA-bd_OB-fold"/>
</dbReference>
<dbReference type="InterPro" id="IPR003717">
    <property type="entry name" value="RecO"/>
</dbReference>
<dbReference type="InterPro" id="IPR042242">
    <property type="entry name" value="RecO_C"/>
</dbReference>
<dbReference type="NCBIfam" id="TIGR00613">
    <property type="entry name" value="reco"/>
    <property type="match status" value="1"/>
</dbReference>
<dbReference type="PANTHER" id="PTHR33991">
    <property type="entry name" value="DNA REPAIR PROTEIN RECO"/>
    <property type="match status" value="1"/>
</dbReference>
<dbReference type="PANTHER" id="PTHR33991:SF1">
    <property type="entry name" value="DNA REPAIR PROTEIN RECO"/>
    <property type="match status" value="1"/>
</dbReference>
<dbReference type="Pfam" id="PF02565">
    <property type="entry name" value="RecO_C"/>
    <property type="match status" value="1"/>
</dbReference>
<dbReference type="Pfam" id="PF11967">
    <property type="entry name" value="RecO_N"/>
    <property type="match status" value="1"/>
</dbReference>
<dbReference type="SUPFAM" id="SSF50249">
    <property type="entry name" value="Nucleic acid-binding proteins"/>
    <property type="match status" value="1"/>
</dbReference>
<protein>
    <recommendedName>
        <fullName evidence="1">DNA repair protein RecO</fullName>
    </recommendedName>
    <alternativeName>
        <fullName evidence="1">Recombination protein O</fullName>
    </alternativeName>
</protein>
<keyword id="KW-0227">DNA damage</keyword>
<keyword id="KW-0233">DNA recombination</keyword>
<keyword id="KW-0234">DNA repair</keyword>
<keyword id="KW-1185">Reference proteome</keyword>
<reference key="1">
    <citation type="journal article" date="2008" name="Genome Biol.">
        <title>The complete genome, comparative and functional analysis of Stenotrophomonas maltophilia reveals an organism heavily shielded by drug resistance determinants.</title>
        <authorList>
            <person name="Crossman L.C."/>
            <person name="Gould V.C."/>
            <person name="Dow J.M."/>
            <person name="Vernikos G.S."/>
            <person name="Okazaki A."/>
            <person name="Sebaihia M."/>
            <person name="Saunders D."/>
            <person name="Arrowsmith C."/>
            <person name="Carver T."/>
            <person name="Peters N."/>
            <person name="Adlem E."/>
            <person name="Kerhornou A."/>
            <person name="Lord A."/>
            <person name="Murphy L."/>
            <person name="Seeger K."/>
            <person name="Squares R."/>
            <person name="Rutter S."/>
            <person name="Quail M.A."/>
            <person name="Rajandream M.A."/>
            <person name="Harris D."/>
            <person name="Churcher C."/>
            <person name="Bentley S.D."/>
            <person name="Parkhill J."/>
            <person name="Thomson N.R."/>
            <person name="Avison M.B."/>
        </authorList>
    </citation>
    <scope>NUCLEOTIDE SEQUENCE [LARGE SCALE GENOMIC DNA]</scope>
    <source>
        <strain>K279a</strain>
    </source>
</reference>
<gene>
    <name evidence="1" type="primary">recO</name>
    <name type="ordered locus">Smlt3547</name>
</gene>